<name>RLMKL_LEGPC</name>
<reference key="1">
    <citation type="submission" date="2006-11" db="EMBL/GenBank/DDBJ databases">
        <title>Identification and characterization of a new conjugation/ type IVA secretion system (trb/tra) of L. pneumophila Corby localized on a mobile genomic island.</title>
        <authorList>
            <person name="Gloeckner G."/>
            <person name="Albert-Weissenberger C."/>
            <person name="Weinmann E."/>
            <person name="Jacobi S."/>
            <person name="Schunder E."/>
            <person name="Steinert M."/>
            <person name="Buchrieser C."/>
            <person name="Hacker J."/>
            <person name="Heuner K."/>
        </authorList>
    </citation>
    <scope>NUCLEOTIDE SEQUENCE [LARGE SCALE GENOMIC DNA]</scope>
    <source>
        <strain>Corby</strain>
    </source>
</reference>
<proteinExistence type="inferred from homology"/>
<protein>
    <recommendedName>
        <fullName evidence="1">Ribosomal RNA large subunit methyltransferase K/L</fullName>
    </recommendedName>
    <domain>
        <recommendedName>
            <fullName evidence="1">23S rRNA m2G2445 methyltransferase</fullName>
            <ecNumber evidence="1">2.1.1.173</ecNumber>
        </recommendedName>
        <alternativeName>
            <fullName evidence="1">rRNA (guanine-N(2)-)-methyltransferase RlmL</fullName>
        </alternativeName>
    </domain>
    <domain>
        <recommendedName>
            <fullName evidence="1">23S rRNA m7G2069 methyltransferase</fullName>
            <ecNumber evidence="1">2.1.1.264</ecNumber>
        </recommendedName>
        <alternativeName>
            <fullName evidence="1">rRNA (guanine-N(7)-)-methyltransferase RlmK</fullName>
        </alternativeName>
    </domain>
</protein>
<evidence type="ECO:0000255" key="1">
    <source>
        <dbReference type="HAMAP-Rule" id="MF_01858"/>
    </source>
</evidence>
<comment type="function">
    <text evidence="1">Specifically methylates the guanine in position 2445 (m2G2445) and the guanine in position 2069 (m7G2069) of 23S rRNA.</text>
</comment>
<comment type="catalytic activity">
    <reaction evidence="1">
        <text>guanosine(2445) in 23S rRNA + S-adenosyl-L-methionine = N(2)-methylguanosine(2445) in 23S rRNA + S-adenosyl-L-homocysteine + H(+)</text>
        <dbReference type="Rhea" id="RHEA:42740"/>
        <dbReference type="Rhea" id="RHEA-COMP:10215"/>
        <dbReference type="Rhea" id="RHEA-COMP:10216"/>
        <dbReference type="ChEBI" id="CHEBI:15378"/>
        <dbReference type="ChEBI" id="CHEBI:57856"/>
        <dbReference type="ChEBI" id="CHEBI:59789"/>
        <dbReference type="ChEBI" id="CHEBI:74269"/>
        <dbReference type="ChEBI" id="CHEBI:74481"/>
        <dbReference type="EC" id="2.1.1.173"/>
    </reaction>
</comment>
<comment type="catalytic activity">
    <reaction evidence="1">
        <text>guanosine(2069) in 23S rRNA + S-adenosyl-L-methionine = N(2)-methylguanosine(2069) in 23S rRNA + S-adenosyl-L-homocysteine + H(+)</text>
        <dbReference type="Rhea" id="RHEA:43772"/>
        <dbReference type="Rhea" id="RHEA-COMP:10688"/>
        <dbReference type="Rhea" id="RHEA-COMP:10689"/>
        <dbReference type="ChEBI" id="CHEBI:15378"/>
        <dbReference type="ChEBI" id="CHEBI:57856"/>
        <dbReference type="ChEBI" id="CHEBI:59789"/>
        <dbReference type="ChEBI" id="CHEBI:74269"/>
        <dbReference type="ChEBI" id="CHEBI:74481"/>
        <dbReference type="EC" id="2.1.1.264"/>
    </reaction>
</comment>
<comment type="subcellular location">
    <subcellularLocation>
        <location evidence="1">Cytoplasm</location>
    </subcellularLocation>
</comment>
<comment type="similarity">
    <text evidence="1">Belongs to the methyltransferase superfamily. RlmKL family.</text>
</comment>
<keyword id="KW-0963">Cytoplasm</keyword>
<keyword id="KW-0489">Methyltransferase</keyword>
<keyword id="KW-0694">RNA-binding</keyword>
<keyword id="KW-0698">rRNA processing</keyword>
<keyword id="KW-0949">S-adenosyl-L-methionine</keyword>
<keyword id="KW-0808">Transferase</keyword>
<accession>A5I9H3</accession>
<feature type="chain" id="PRO_0000366769" description="Ribosomal RNA large subunit methyltransferase K/L">
    <location>
        <begin position="1"/>
        <end position="707"/>
    </location>
</feature>
<feature type="domain" description="THUMP" evidence="1">
    <location>
        <begin position="44"/>
        <end position="155"/>
    </location>
</feature>
<organism>
    <name type="scientific">Legionella pneumophila (strain Corby)</name>
    <dbReference type="NCBI Taxonomy" id="400673"/>
    <lineage>
        <taxon>Bacteria</taxon>
        <taxon>Pseudomonadati</taxon>
        <taxon>Pseudomonadota</taxon>
        <taxon>Gammaproteobacteria</taxon>
        <taxon>Legionellales</taxon>
        <taxon>Legionellaceae</taxon>
        <taxon>Legionella</taxon>
    </lineage>
</organism>
<gene>
    <name evidence="1" type="primary">rlmL</name>
    <name type="ordered locus">LPC_0023</name>
</gene>
<dbReference type="EC" id="2.1.1.173" evidence="1"/>
<dbReference type="EC" id="2.1.1.264" evidence="1"/>
<dbReference type="EMBL" id="CP000675">
    <property type="protein sequence ID" value="ABQ54023.1"/>
    <property type="molecule type" value="Genomic_DNA"/>
</dbReference>
<dbReference type="SMR" id="A5I9H3"/>
<dbReference type="KEGG" id="lpc:LPC_0023"/>
<dbReference type="HOGENOM" id="CLU_014042_2_0_6"/>
<dbReference type="GO" id="GO:0005737">
    <property type="term" value="C:cytoplasm"/>
    <property type="evidence" value="ECO:0007669"/>
    <property type="project" value="UniProtKB-SubCell"/>
</dbReference>
<dbReference type="GO" id="GO:0052915">
    <property type="term" value="F:23S rRNA (guanine(2445)-N(2))-methyltransferase activity"/>
    <property type="evidence" value="ECO:0007669"/>
    <property type="project" value="UniProtKB-UniRule"/>
</dbReference>
<dbReference type="GO" id="GO:0003723">
    <property type="term" value="F:RNA binding"/>
    <property type="evidence" value="ECO:0007669"/>
    <property type="project" value="UniProtKB-KW"/>
</dbReference>
<dbReference type="GO" id="GO:0070043">
    <property type="term" value="F:rRNA (guanine-N7-)-methyltransferase activity"/>
    <property type="evidence" value="ECO:0007669"/>
    <property type="project" value="UniProtKB-UniRule"/>
</dbReference>
<dbReference type="CDD" id="cd02440">
    <property type="entry name" value="AdoMet_MTases"/>
    <property type="match status" value="1"/>
</dbReference>
<dbReference type="CDD" id="cd11715">
    <property type="entry name" value="THUMP_AdoMetMT"/>
    <property type="match status" value="1"/>
</dbReference>
<dbReference type="Gene3D" id="3.30.2130.30">
    <property type="match status" value="1"/>
</dbReference>
<dbReference type="Gene3D" id="3.30.750.80">
    <property type="entry name" value="RNA methyltransferase domain (HRMD) like"/>
    <property type="match status" value="1"/>
</dbReference>
<dbReference type="Gene3D" id="3.40.50.150">
    <property type="entry name" value="Vaccinia Virus protein VP39"/>
    <property type="match status" value="2"/>
</dbReference>
<dbReference type="HAMAP" id="MF_01858">
    <property type="entry name" value="23SrRNA_methyltr_KL"/>
    <property type="match status" value="1"/>
</dbReference>
<dbReference type="InterPro" id="IPR017244">
    <property type="entry name" value="23SrRNA_methyltr_KL"/>
</dbReference>
<dbReference type="InterPro" id="IPR002052">
    <property type="entry name" value="DNA_methylase_N6_adenine_CS"/>
</dbReference>
<dbReference type="InterPro" id="IPR000241">
    <property type="entry name" value="RlmKL-like_Mtase"/>
</dbReference>
<dbReference type="InterPro" id="IPR053943">
    <property type="entry name" value="RlmKL-like_Mtase_CS"/>
</dbReference>
<dbReference type="InterPro" id="IPR054170">
    <property type="entry name" value="RlmL_1st"/>
</dbReference>
<dbReference type="InterPro" id="IPR019614">
    <property type="entry name" value="SAM-dep_methyl-trfase"/>
</dbReference>
<dbReference type="InterPro" id="IPR029063">
    <property type="entry name" value="SAM-dependent_MTases_sf"/>
</dbReference>
<dbReference type="InterPro" id="IPR004114">
    <property type="entry name" value="THUMP_dom"/>
</dbReference>
<dbReference type="NCBIfam" id="NF008748">
    <property type="entry name" value="PRK11783.1"/>
    <property type="match status" value="1"/>
</dbReference>
<dbReference type="PANTHER" id="PTHR47313">
    <property type="entry name" value="RIBOSOMAL RNA LARGE SUBUNIT METHYLTRANSFERASE K/L"/>
    <property type="match status" value="1"/>
</dbReference>
<dbReference type="PANTHER" id="PTHR47313:SF1">
    <property type="entry name" value="RIBOSOMAL RNA LARGE SUBUNIT METHYLTRANSFERASE K_L"/>
    <property type="match status" value="1"/>
</dbReference>
<dbReference type="Pfam" id="PF10672">
    <property type="entry name" value="Methyltrans_SAM"/>
    <property type="match status" value="1"/>
</dbReference>
<dbReference type="Pfam" id="PF22020">
    <property type="entry name" value="RlmL_1st"/>
    <property type="match status" value="1"/>
</dbReference>
<dbReference type="Pfam" id="PF02926">
    <property type="entry name" value="THUMP"/>
    <property type="match status" value="1"/>
</dbReference>
<dbReference type="Pfam" id="PF01170">
    <property type="entry name" value="UPF0020"/>
    <property type="match status" value="1"/>
</dbReference>
<dbReference type="PIRSF" id="PIRSF037618">
    <property type="entry name" value="RNA_Mtase_bacteria_prd"/>
    <property type="match status" value="1"/>
</dbReference>
<dbReference type="SMART" id="SM00981">
    <property type="entry name" value="THUMP"/>
    <property type="match status" value="1"/>
</dbReference>
<dbReference type="SUPFAM" id="SSF53335">
    <property type="entry name" value="S-adenosyl-L-methionine-dependent methyltransferases"/>
    <property type="match status" value="2"/>
</dbReference>
<dbReference type="PROSITE" id="PS51165">
    <property type="entry name" value="THUMP"/>
    <property type="match status" value="1"/>
</dbReference>
<dbReference type="PROSITE" id="PS01261">
    <property type="entry name" value="UPF0020"/>
    <property type="match status" value="1"/>
</dbReference>
<sequence length="707" mass="80166">MNYSLFISCSKGLEYLLEDELKGLGLHVTQVSPQGVYGEASLPVIYNLCLWSRLANRIQLILFSGHAAKEQAVHQLCTDFHWQTVFTHDKTIAIEFHGASEQIRNTMFGAQIVKDGIVDHFRRLNGSRPSVDKEKPQILIHAHLKNDILTVSFDLVGYSLHQRGYRKKAGKAPLKENVAAAMLLRAKWPELAAQGYGLHDPFCGSGTLVIEAAMMAAHIAPGLLRQDQSLQYWARHQSSLWEKLRTQALQQVKPLAVKLVGTDADGKIITLARSNAERAGVLPLVEFNTLPLNACRPGTKKGLVVCNPPYGERLGEVTQLVPLYQQLGTTLHTCYQGWQAAILTSSPVLAKALGLRADKQYTLYNGPLECKLYCLTLSAANKLKNTPNAPLSDNAQMLFNRLEKNRNHLQKWARKNQITCYRIYDADLPEYAYAIDIYNDYAVLQEYAPPASIPVHKAEKRSLEMLQVVPRALGIHPEKLIVKQRKQQKGSEQYQKIGKTSQRLIVTEGKAKLIVNLYDYLDTGLFLDHRLMRLKFAQLEPGTRFLNCFCYTASASVHAALAGALTTNVDLSKTYLLWAEDNFRLNDIDLSKHQFLQYDCKEWMKITRDKFDVIFLDPPSFSNSKRMSDILDIQRDHVSLINMAMRLLNPNGVLYFSTNLRQFKLEPMLKEKYAVQDITPQTIDQDFKRNSKIHHCFKIVMPHFADN</sequence>